<dbReference type="EMBL" id="AK131111">
    <property type="protein sequence ID" value="BAD21361.1"/>
    <property type="status" value="ALT_INIT"/>
    <property type="molecule type" value="mRNA"/>
</dbReference>
<dbReference type="EMBL" id="BC025196">
    <property type="protein sequence ID" value="AAH25196.1"/>
    <property type="molecule type" value="mRNA"/>
</dbReference>
<dbReference type="EMBL" id="BC089363">
    <property type="protein sequence ID" value="AAH89363.1"/>
    <property type="molecule type" value="mRNA"/>
</dbReference>
<dbReference type="EMBL" id="AK030000">
    <property type="protein sequence ID" value="BAC26726.1"/>
    <property type="status" value="ALT_INIT"/>
    <property type="molecule type" value="mRNA"/>
</dbReference>
<dbReference type="CCDS" id="CCDS21892.1"/>
<dbReference type="RefSeq" id="NP_666317.2">
    <property type="nucleotide sequence ID" value="NM_146205.2"/>
</dbReference>
<dbReference type="SMR" id="Q5EBP3"/>
<dbReference type="FunCoup" id="Q5EBP3">
    <property type="interactions" value="1176"/>
</dbReference>
<dbReference type="STRING" id="10090.ENSMUSP00000040568"/>
<dbReference type="GlyGen" id="Q5EBP3">
    <property type="glycosylation" value="4 sites, 1 N-linked glycan (1 site)"/>
</dbReference>
<dbReference type="PhosphoSitePlus" id="Q5EBP3"/>
<dbReference type="jPOST" id="Q5EBP3"/>
<dbReference type="PaxDb" id="10090-ENSMUSP00000040568"/>
<dbReference type="PeptideAtlas" id="Q5EBP3"/>
<dbReference type="ProteomicsDB" id="277294"/>
<dbReference type="Antibodypedia" id="51623">
    <property type="antibodies" value="82 antibodies from 18 providers"/>
</dbReference>
<dbReference type="Ensembl" id="ENSMUST00000044660.6">
    <property type="protein sequence ID" value="ENSMUSP00000040568.6"/>
    <property type="gene ID" value="ENSMUSG00000042178.7"/>
</dbReference>
<dbReference type="GeneID" id="233912"/>
<dbReference type="KEGG" id="mmu:233912"/>
<dbReference type="UCSC" id="uc009jyk.1">
    <property type="organism name" value="mouse"/>
</dbReference>
<dbReference type="AGR" id="MGI:2384586"/>
<dbReference type="CTD" id="79798"/>
<dbReference type="MGI" id="MGI:2384586">
    <property type="gene designation" value="Armc5"/>
</dbReference>
<dbReference type="VEuPathDB" id="HostDB:ENSMUSG00000042178"/>
<dbReference type="eggNOG" id="ENOG502QSYU">
    <property type="taxonomic scope" value="Eukaryota"/>
</dbReference>
<dbReference type="GeneTree" id="ENSGT00390000009109"/>
<dbReference type="HOGENOM" id="CLU_007517_0_0_1"/>
<dbReference type="InParanoid" id="Q5EBP3"/>
<dbReference type="OMA" id="NCCTEGG"/>
<dbReference type="OrthoDB" id="6086604at2759"/>
<dbReference type="PhylomeDB" id="Q5EBP3"/>
<dbReference type="TreeFam" id="TF337762"/>
<dbReference type="UniPathway" id="UPA00143"/>
<dbReference type="BioGRID-ORCS" id="233912">
    <property type="hits" value="17 hits in 80 CRISPR screens"/>
</dbReference>
<dbReference type="PRO" id="PR:Q5EBP3"/>
<dbReference type="Proteomes" id="UP000000589">
    <property type="component" value="Chromosome 7"/>
</dbReference>
<dbReference type="RNAct" id="Q5EBP3">
    <property type="molecule type" value="protein"/>
</dbReference>
<dbReference type="Bgee" id="ENSMUSG00000042178">
    <property type="expression patterns" value="Expressed in paneth cell and 237 other cell types or tissues"/>
</dbReference>
<dbReference type="GO" id="GO:0000785">
    <property type="term" value="C:chromatin"/>
    <property type="evidence" value="ECO:0000250"/>
    <property type="project" value="UniProtKB"/>
</dbReference>
<dbReference type="GO" id="GO:0031463">
    <property type="term" value="C:Cul3-RING ubiquitin ligase complex"/>
    <property type="evidence" value="ECO:0000250"/>
    <property type="project" value="UniProtKB"/>
</dbReference>
<dbReference type="GO" id="GO:0005737">
    <property type="term" value="C:cytoplasm"/>
    <property type="evidence" value="ECO:0000250"/>
    <property type="project" value="UniProtKB"/>
</dbReference>
<dbReference type="GO" id="GO:0005829">
    <property type="term" value="C:cytosol"/>
    <property type="evidence" value="ECO:0007669"/>
    <property type="project" value="Ensembl"/>
</dbReference>
<dbReference type="GO" id="GO:0005925">
    <property type="term" value="C:focal adhesion"/>
    <property type="evidence" value="ECO:0007669"/>
    <property type="project" value="Ensembl"/>
</dbReference>
<dbReference type="GO" id="GO:0016020">
    <property type="term" value="C:membrane"/>
    <property type="evidence" value="ECO:0000314"/>
    <property type="project" value="MGI"/>
</dbReference>
<dbReference type="GO" id="GO:0005654">
    <property type="term" value="C:nucleoplasm"/>
    <property type="evidence" value="ECO:0007669"/>
    <property type="project" value="Ensembl"/>
</dbReference>
<dbReference type="GO" id="GO:1990756">
    <property type="term" value="F:ubiquitin-like ligase-substrate adaptor activity"/>
    <property type="evidence" value="ECO:0000314"/>
    <property type="project" value="UniProtKB"/>
</dbReference>
<dbReference type="GO" id="GO:0035801">
    <property type="term" value="P:adrenal cortex development"/>
    <property type="evidence" value="ECO:0000315"/>
    <property type="project" value="MGI"/>
</dbReference>
<dbReference type="GO" id="GO:0043367">
    <property type="term" value="P:CD4-positive, alpha-beta T cell differentiation"/>
    <property type="evidence" value="ECO:0000315"/>
    <property type="project" value="MGI"/>
</dbReference>
<dbReference type="GO" id="GO:0051607">
    <property type="term" value="P:defense response to virus"/>
    <property type="evidence" value="ECO:0000315"/>
    <property type="project" value="MGI"/>
</dbReference>
<dbReference type="GO" id="GO:0007369">
    <property type="term" value="P:gastrulation"/>
    <property type="evidence" value="ECO:0000315"/>
    <property type="project" value="MGI"/>
</dbReference>
<dbReference type="GO" id="GO:0030097">
    <property type="term" value="P:hemopoiesis"/>
    <property type="evidence" value="ECO:0000315"/>
    <property type="project" value="MGI"/>
</dbReference>
<dbReference type="GO" id="GO:0001701">
    <property type="term" value="P:in utero embryonic development"/>
    <property type="evidence" value="ECO:0000315"/>
    <property type="project" value="MGI"/>
</dbReference>
<dbReference type="GO" id="GO:0001707">
    <property type="term" value="P:mesoderm formation"/>
    <property type="evidence" value="ECO:0000315"/>
    <property type="project" value="MGI"/>
</dbReference>
<dbReference type="GO" id="GO:0043161">
    <property type="term" value="P:proteasome-mediated ubiquitin-dependent protein catabolic process"/>
    <property type="evidence" value="ECO:0000314"/>
    <property type="project" value="UniProtKB"/>
</dbReference>
<dbReference type="GO" id="GO:0050810">
    <property type="term" value="P:regulation of steroid biosynthetic process"/>
    <property type="evidence" value="ECO:0000315"/>
    <property type="project" value="MGI"/>
</dbReference>
<dbReference type="GO" id="GO:0160240">
    <property type="term" value="P:RNA polymerase II transcription initiation surveillance"/>
    <property type="evidence" value="ECO:0000250"/>
    <property type="project" value="UniProtKB"/>
</dbReference>
<dbReference type="GO" id="GO:0042098">
    <property type="term" value="P:T cell proliferation"/>
    <property type="evidence" value="ECO:0000315"/>
    <property type="project" value="MGI"/>
</dbReference>
<dbReference type="Gene3D" id="1.25.10.10">
    <property type="entry name" value="Leucine-rich Repeat Variant"/>
    <property type="match status" value="1"/>
</dbReference>
<dbReference type="Gene3D" id="3.30.710.10">
    <property type="entry name" value="Potassium Channel Kv1.1, Chain A"/>
    <property type="match status" value="1"/>
</dbReference>
<dbReference type="InterPro" id="IPR011989">
    <property type="entry name" value="ARM-like"/>
</dbReference>
<dbReference type="InterPro" id="IPR016024">
    <property type="entry name" value="ARM-type_fold"/>
</dbReference>
<dbReference type="InterPro" id="IPR055445">
    <property type="entry name" value="ARM_ARMC5"/>
</dbReference>
<dbReference type="InterPro" id="IPR000225">
    <property type="entry name" value="Armadillo"/>
</dbReference>
<dbReference type="InterPro" id="IPR000210">
    <property type="entry name" value="BTB/POZ_dom"/>
</dbReference>
<dbReference type="InterPro" id="IPR011333">
    <property type="entry name" value="SKP1/BTB/POZ_sf"/>
</dbReference>
<dbReference type="PANTHER" id="PTHR23312:SF8">
    <property type="entry name" value="ARMADILLO REPEAT-CONTAINING PROTEIN 5"/>
    <property type="match status" value="1"/>
</dbReference>
<dbReference type="PANTHER" id="PTHR23312">
    <property type="entry name" value="ARMC5 ARMADILLO REPEAT-CONTAINING -RELATED"/>
    <property type="match status" value="1"/>
</dbReference>
<dbReference type="Pfam" id="PF24768">
    <property type="entry name" value="ARM_ARMC5"/>
    <property type="match status" value="1"/>
</dbReference>
<dbReference type="SMART" id="SM00185">
    <property type="entry name" value="ARM"/>
    <property type="match status" value="5"/>
</dbReference>
<dbReference type="SUPFAM" id="SSF48371">
    <property type="entry name" value="ARM repeat"/>
    <property type="match status" value="1"/>
</dbReference>
<dbReference type="SUPFAM" id="SSF54695">
    <property type="entry name" value="POZ domain"/>
    <property type="match status" value="1"/>
</dbReference>
<dbReference type="PROSITE" id="PS50097">
    <property type="entry name" value="BTB"/>
    <property type="match status" value="1"/>
</dbReference>
<name>ARMC5_MOUSE</name>
<sequence length="926" mass="96728">MAAARPALTDSLSFCLAQLTAAAGEGPGGGKDPATNETPLGRALLALRTRHIKAAEGIERFRARGGLRPLLALLRRTAAAGPAPSQAASGSAPSSVASAGSTPGHAPAAESLLTPSLPMRLRKTLDLALSILANCCTEGACRAEVRRLGGILPLVTILQCVKTDSIQNRTARALGNLAMEPESCRDIHSAGAVPFLVESLTACQDSQCLQSIVRALRNLADSPQHRLALAQQGAVRPLAELLATAPDPALTAALVRALLELSRGCSRACAEQLSLGGALGPLVSLASHPKRAIREAAILILANLCAQGLVRPALGNAGGVEVLLGELRRRRSPGGSSSATQQPLVRAVCLLCREAINRARLRDAGGLELLMGLLQDPGASAWHPRVVAALVGFLYDTGALGKLQALGLVPLLARQLCGEAGEEEEEGIEAASWDFPEERTSGQAEGGSFRSLRLWLISEGYAAGPGDISPDWSPERCPMPEPSESVSPTPGQTSMSTPRTLRKPGRIPAATPEEPWGQEGPALLLLSRFSQAPDPSGALVTGPALCGLLAYVTGAPGPPNPRALRILARLTCNPACLEAFVRTYGAALLRAWLVLGVSPDDWPVPHARPVHRSQHRELGEMLLQNLTVQAESPFGVGALTHLLLSGSPEDRVACALTLPFICRKPTLWRRLLLDQGGLRLLLTALTQPAPHPLFLFFAADSLSCLQGLVSPTASPVPLPALPLELDSPPPCLYEPLLGPAPAPAPDLHFVLDSGLQLPAQRAASAAASPFFRALLSGSFAEAQMDLVPLRGLSPGAAWPVLHHLHGCRGCGAALGPVPPPGQPLLGSKAEEALEAAGRFLLPALEEELEEAVGRIHLSPRGGPESVGEVFRLGRPRLAAHCARWTLEPGQCPRKRALALTGLVEAAGEEAGPLTEALLAVVMGIES</sequence>
<protein>
    <recommendedName>
        <fullName evidence="9">Armadillo repeat-containing protein 5</fullName>
    </recommendedName>
</protein>
<reference key="1">
    <citation type="journal article" date="2004" name="DNA Res.">
        <title>Prediction of the coding sequences of mouse homologues of FLJ genes: the complete nucleotide sequences of 110 mouse FLJ-homologous cDNAs identified by screening of terminal sequences of cDNA clones randomly sampled from size-fractionated libraries.</title>
        <authorList>
            <person name="Okazaki N."/>
            <person name="Kikuno R."/>
            <person name="Ohara R."/>
            <person name="Inamoto S."/>
            <person name="Koseki H."/>
            <person name="Hiraoka S."/>
            <person name="Saga Y."/>
            <person name="Kitamura H."/>
            <person name="Nakagawa T."/>
            <person name="Nagase T."/>
            <person name="Ohara O."/>
            <person name="Koga H."/>
        </authorList>
    </citation>
    <scope>NUCLEOTIDE SEQUENCE [LARGE SCALE MRNA]</scope>
    <source>
        <tissue>Embryonic tail</tissue>
    </source>
</reference>
<reference key="2">
    <citation type="journal article" date="2004" name="Genome Res.">
        <title>The status, quality, and expansion of the NIH full-length cDNA project: the Mammalian Gene Collection (MGC).</title>
        <authorList>
            <consortium name="The MGC Project Team"/>
        </authorList>
    </citation>
    <scope>NUCLEOTIDE SEQUENCE [LARGE SCALE MRNA]</scope>
    <source>
        <strain>C57BL/6J</strain>
        <strain>FVB/N-3</strain>
        <tissue>Brain</tissue>
        <tissue>Mammary tumor</tissue>
    </source>
</reference>
<reference key="3">
    <citation type="journal article" date="2005" name="Science">
        <title>The transcriptional landscape of the mammalian genome.</title>
        <authorList>
            <person name="Carninci P."/>
            <person name="Kasukawa T."/>
            <person name="Katayama S."/>
            <person name="Gough J."/>
            <person name="Frith M.C."/>
            <person name="Maeda N."/>
            <person name="Oyama R."/>
            <person name="Ravasi T."/>
            <person name="Lenhard B."/>
            <person name="Wells C."/>
            <person name="Kodzius R."/>
            <person name="Shimokawa K."/>
            <person name="Bajic V.B."/>
            <person name="Brenner S.E."/>
            <person name="Batalov S."/>
            <person name="Forrest A.R."/>
            <person name="Zavolan M."/>
            <person name="Davis M.J."/>
            <person name="Wilming L.G."/>
            <person name="Aidinis V."/>
            <person name="Allen J.E."/>
            <person name="Ambesi-Impiombato A."/>
            <person name="Apweiler R."/>
            <person name="Aturaliya R.N."/>
            <person name="Bailey T.L."/>
            <person name="Bansal M."/>
            <person name="Baxter L."/>
            <person name="Beisel K.W."/>
            <person name="Bersano T."/>
            <person name="Bono H."/>
            <person name="Chalk A.M."/>
            <person name="Chiu K.P."/>
            <person name="Choudhary V."/>
            <person name="Christoffels A."/>
            <person name="Clutterbuck D.R."/>
            <person name="Crowe M.L."/>
            <person name="Dalla E."/>
            <person name="Dalrymple B.P."/>
            <person name="de Bono B."/>
            <person name="Della Gatta G."/>
            <person name="di Bernardo D."/>
            <person name="Down T."/>
            <person name="Engstrom P."/>
            <person name="Fagiolini M."/>
            <person name="Faulkner G."/>
            <person name="Fletcher C.F."/>
            <person name="Fukushima T."/>
            <person name="Furuno M."/>
            <person name="Futaki S."/>
            <person name="Gariboldi M."/>
            <person name="Georgii-Hemming P."/>
            <person name="Gingeras T.R."/>
            <person name="Gojobori T."/>
            <person name="Green R.E."/>
            <person name="Gustincich S."/>
            <person name="Harbers M."/>
            <person name="Hayashi Y."/>
            <person name="Hensch T.K."/>
            <person name="Hirokawa N."/>
            <person name="Hill D."/>
            <person name="Huminiecki L."/>
            <person name="Iacono M."/>
            <person name="Ikeo K."/>
            <person name="Iwama A."/>
            <person name="Ishikawa T."/>
            <person name="Jakt M."/>
            <person name="Kanapin A."/>
            <person name="Katoh M."/>
            <person name="Kawasawa Y."/>
            <person name="Kelso J."/>
            <person name="Kitamura H."/>
            <person name="Kitano H."/>
            <person name="Kollias G."/>
            <person name="Krishnan S.P."/>
            <person name="Kruger A."/>
            <person name="Kummerfeld S.K."/>
            <person name="Kurochkin I.V."/>
            <person name="Lareau L.F."/>
            <person name="Lazarevic D."/>
            <person name="Lipovich L."/>
            <person name="Liu J."/>
            <person name="Liuni S."/>
            <person name="McWilliam S."/>
            <person name="Madan Babu M."/>
            <person name="Madera M."/>
            <person name="Marchionni L."/>
            <person name="Matsuda H."/>
            <person name="Matsuzawa S."/>
            <person name="Miki H."/>
            <person name="Mignone F."/>
            <person name="Miyake S."/>
            <person name="Morris K."/>
            <person name="Mottagui-Tabar S."/>
            <person name="Mulder N."/>
            <person name="Nakano N."/>
            <person name="Nakauchi H."/>
            <person name="Ng P."/>
            <person name="Nilsson R."/>
            <person name="Nishiguchi S."/>
            <person name="Nishikawa S."/>
            <person name="Nori F."/>
            <person name="Ohara O."/>
            <person name="Okazaki Y."/>
            <person name="Orlando V."/>
            <person name="Pang K.C."/>
            <person name="Pavan W.J."/>
            <person name="Pavesi G."/>
            <person name="Pesole G."/>
            <person name="Petrovsky N."/>
            <person name="Piazza S."/>
            <person name="Reed J."/>
            <person name="Reid J.F."/>
            <person name="Ring B.Z."/>
            <person name="Ringwald M."/>
            <person name="Rost B."/>
            <person name="Ruan Y."/>
            <person name="Salzberg S.L."/>
            <person name="Sandelin A."/>
            <person name="Schneider C."/>
            <person name="Schoenbach C."/>
            <person name="Sekiguchi K."/>
            <person name="Semple C.A."/>
            <person name="Seno S."/>
            <person name="Sessa L."/>
            <person name="Sheng Y."/>
            <person name="Shibata Y."/>
            <person name="Shimada H."/>
            <person name="Shimada K."/>
            <person name="Silva D."/>
            <person name="Sinclair B."/>
            <person name="Sperling S."/>
            <person name="Stupka E."/>
            <person name="Sugiura K."/>
            <person name="Sultana R."/>
            <person name="Takenaka Y."/>
            <person name="Taki K."/>
            <person name="Tammoja K."/>
            <person name="Tan S.L."/>
            <person name="Tang S."/>
            <person name="Taylor M.S."/>
            <person name="Tegner J."/>
            <person name="Teichmann S.A."/>
            <person name="Ueda H.R."/>
            <person name="van Nimwegen E."/>
            <person name="Verardo R."/>
            <person name="Wei C.L."/>
            <person name="Yagi K."/>
            <person name="Yamanishi H."/>
            <person name="Zabarovsky E."/>
            <person name="Zhu S."/>
            <person name="Zimmer A."/>
            <person name="Hide W."/>
            <person name="Bult C."/>
            <person name="Grimmond S.M."/>
            <person name="Teasdale R.D."/>
            <person name="Liu E.T."/>
            <person name="Brusic V."/>
            <person name="Quackenbush J."/>
            <person name="Wahlestedt C."/>
            <person name="Mattick J.S."/>
            <person name="Hume D.A."/>
            <person name="Kai C."/>
            <person name="Sasaki D."/>
            <person name="Tomaru Y."/>
            <person name="Fukuda S."/>
            <person name="Kanamori-Katayama M."/>
            <person name="Suzuki M."/>
            <person name="Aoki J."/>
            <person name="Arakawa T."/>
            <person name="Iida J."/>
            <person name="Imamura K."/>
            <person name="Itoh M."/>
            <person name="Kato T."/>
            <person name="Kawaji H."/>
            <person name="Kawagashira N."/>
            <person name="Kawashima T."/>
            <person name="Kojima M."/>
            <person name="Kondo S."/>
            <person name="Konno H."/>
            <person name="Nakano K."/>
            <person name="Ninomiya N."/>
            <person name="Nishio T."/>
            <person name="Okada M."/>
            <person name="Plessy C."/>
            <person name="Shibata K."/>
            <person name="Shiraki T."/>
            <person name="Suzuki S."/>
            <person name="Tagami M."/>
            <person name="Waki K."/>
            <person name="Watahiki A."/>
            <person name="Okamura-Oho Y."/>
            <person name="Suzuki H."/>
            <person name="Kawai J."/>
            <person name="Hayashizaki Y."/>
        </authorList>
    </citation>
    <scope>NUCLEOTIDE SEQUENCE [LARGE SCALE MRNA] OF 126-926</scope>
    <source>
        <strain>C57BL/6J</strain>
        <tissue>Testis</tissue>
    </source>
</reference>
<reference key="4">
    <citation type="journal article" date="2017" name="Nat. Commun.">
        <title>Armc5 deletion causes developmental defects and compromises T-cell immune responses.</title>
        <authorList>
            <person name="Hu Y."/>
            <person name="Lao L."/>
            <person name="Mao J."/>
            <person name="Jin W."/>
            <person name="Luo H."/>
            <person name="Charpentier T."/>
            <person name="Qi S."/>
            <person name="Peng J."/>
            <person name="Hu B."/>
            <person name="Marcinkiewicz M.M."/>
            <person name="Lamarre A."/>
            <person name="Wu J."/>
        </authorList>
    </citation>
    <scope>FUNCTION</scope>
    <scope>DISRUPTION PHENOTYPE</scope>
    <scope>TISSUE SPECIFICITY</scope>
    <scope>INDUCTION BY CD3E AND CD28</scope>
    <scope>SUBCELLULAR LOCATION</scope>
</reference>
<reference key="5">
    <citation type="journal article" date="2022" name="Nucleic Acids Res.">
        <title>ARMC5 is part of an RPB1-specific ubiquitin ligase implicated in adrenal hyperplasia.</title>
        <authorList>
            <person name="Lao L."/>
            <person name="Bourdeau I."/>
            <person name="Gagliardi L."/>
            <person name="He X."/>
            <person name="Shi W."/>
            <person name="Hao B."/>
            <person name="Tan M."/>
            <person name="Hu Y."/>
            <person name="Peng J."/>
            <person name="Coulombe B."/>
            <person name="Torpy D.J."/>
            <person name="Scott H.S."/>
            <person name="Lacroix A."/>
            <person name="Luo H."/>
            <person name="Wu J."/>
        </authorList>
    </citation>
    <scope>DISRUPTION PHENOTYPE</scope>
</reference>
<reference key="6">
    <citation type="journal article" date="2024" name="Genome Biol.">
        <title>ARMC5 controls the degradation of most Pol II subunits, and ARMC5 mutation increases neural tube defect risks in mice and humans.</title>
        <authorList>
            <person name="Luo H."/>
            <person name="Lao L."/>
            <person name="Au K.S."/>
            <person name="Northrup H."/>
            <person name="He X."/>
            <person name="Forget D."/>
            <person name="Gauthier M.S."/>
            <person name="Coulombe B."/>
            <person name="Bourdeau I."/>
            <person name="Shi W."/>
            <person name="Gagliardi L."/>
            <person name="Fragoso M.C.B.V."/>
            <person name="Peng J."/>
            <person name="Wu J."/>
        </authorList>
    </citation>
    <scope>DISRUPTION PHENOTYPE</scope>
</reference>
<reference key="7">
    <citation type="journal article" date="2024" name="J. Biol. Chem.">
        <title>ARMC5 selectively degrades SCAP-free SREBF1 and is essential for fatty acid desaturation in adipocytes.</title>
        <authorList>
            <person name="Uota A."/>
            <person name="Okuno Y."/>
            <person name="Fukuhara A."/>
            <person name="Sasaki S."/>
            <person name="Kobayashi S."/>
            <person name="Shimomura I."/>
        </authorList>
    </citation>
    <scope>FUNCTION</scope>
    <scope>DISRUPTION PHENOTYPE</scope>
</reference>
<gene>
    <name evidence="8 10" type="primary">Armc5</name>
</gene>
<comment type="function">
    <text evidence="1 4 7">Substrate-recognition component of a BCR (BTB-CUL3-RBX1) E3 ubiquitin ligase complex that terminates RNA polymerase II (Pol II) transcription in the promoter-proximal region of genes (By similarity). The BCR(ARMC5) complex provides a quality checkpoint during transcription elongation by driving premature transcription termination of transcripts that are unfavorably configured for transcriptional elongation: the BCR(ARMC5) complex acts by mediating ubiquitination of Pol II subunit POLR2A phosphorylated at 'Ser-5' of the C-terminal domain (CTD), leading to POLR2A degradation (By similarity). The BCR(ARMC5) complex acts in parallel of the integrator complex and is specific for RNA Pol II originating from the promoter-proximal zone: it does not ubiquitinate elongation-stalled RNA Pol II (By similarity). The BCR(ARMC5) complex also acts as a regulator of fatty acid desaturation by mediating ubiquitination and degradation of SCAP-free SREBF1 and SREBF2 (PubMed:39491648). Involved in fetal development, T-cell function and adrenal gland growth homeostasis (PubMed:28169274). Plays a role in steroidogenesis, modulates steroidogenic enzymes expression and cortisol production (By similarity).</text>
</comment>
<comment type="pathway">
    <text evidence="1">Protein modification; protein ubiquitination.</text>
</comment>
<comment type="subunit">
    <text evidence="1">Substrate-recognition component of the BCR(ARMC5) E3 ubiquitin ligase complex, at least composed of CUL3, ARMC5 and RBX1.</text>
</comment>
<comment type="subcellular location">
    <subcellularLocation>
        <location evidence="1">Nucleus</location>
    </subcellularLocation>
    <subcellularLocation>
        <location evidence="1">Chromosome</location>
    </subcellularLocation>
    <subcellularLocation>
        <location evidence="4">Cytoplasm</location>
    </subcellularLocation>
    <text evidence="1">Associates to RNA polymerase II (Pol II) on chromatin.</text>
</comment>
<comment type="tissue specificity">
    <text evidence="4">Expression is high in the thymus, stomach, bone marrow and lymphatic tissues (including lymph nodes and intestinal wall). Also expressed in the adrenal gland, skin and in brain structures, with noticeable levels found in the cerebellum.</text>
</comment>
<comment type="induction">
    <text evidence="4">In CD4(+) T-cells, mRNA expression is induced 2h after CD3E plus CD28 stimulation, then subsides and remains low between 24 and 72h post-activation.</text>
</comment>
<comment type="PTM">
    <text evidence="1">Ubiquitinated by a BCR (BTB-CUL3-RBX1) E3 ubiquitin ligase complex, leading to its degradation. Deubiquitinated by USP7.</text>
</comment>
<comment type="disruption phenotype">
    <text evidence="4 5 6 7">Embryonic lethality, with its severity depending on genetic background of the mice: embryonic lethality becomes more severe with higher degrees of genetic background purity (PubMed:28169274). Knockout mice are small in body size (PubMed:28169274). They have compromised T-cell proliferation and differentiation into Th1 and Th17 cells, increased T-cell apoptosis, reduced severity of experimental autoimmune encephalitis, and defective immune responses to lymphocytic choriomeningitis virus infection (PubMed:28169274). They develop adrenal gland hyperplasia in old age (PubMed:28169274). Surviving mice show increased incidence of neural tube defects, due to decreased proliferation and increased apoptosis of cells involved in neural tube development (PubMed:38225631). At the cellular level, a significant reduction in POLR2A ubiquitination followed by an accumulation of POLR2A is observed, leading to an enlarged RNA polymerase II pool in normal tissues and organs (PubMed:35687106, PubMed:38225631). Conditional deletion in adipocytes leads to impaired fatty acid desaturation in the white adipose tissue (PubMed:39491648).</text>
</comment>
<comment type="sequence caution" evidence="9">
    <conflict type="erroneous initiation">
        <sequence resource="EMBL-CDS" id="BAC26726"/>
    </conflict>
    <text>Extended N-terminus.</text>
</comment>
<comment type="sequence caution" evidence="9">
    <conflict type="erroneous initiation">
        <sequence resource="EMBL-CDS" id="BAD21361"/>
    </conflict>
    <text>Truncated N-terminus.</text>
</comment>
<proteinExistence type="evidence at transcript level"/>
<feature type="chain" id="PRO_0000284406" description="Armadillo repeat-containing protein 5">
    <location>
        <begin position="1"/>
        <end position="926"/>
    </location>
</feature>
<feature type="repeat" description="ARM 1">
    <location>
        <begin position="139"/>
        <end position="179"/>
    </location>
</feature>
<feature type="repeat" description="ARM 2">
    <location>
        <begin position="181"/>
        <end position="221"/>
    </location>
</feature>
<feature type="repeat" description="ARM 3">
    <location>
        <begin position="223"/>
        <end position="263"/>
    </location>
</feature>
<feature type="repeat" description="ARM 4">
    <location>
        <begin position="267"/>
        <end position="306"/>
    </location>
</feature>
<feature type="repeat" description="ARM 5">
    <location>
        <begin position="307"/>
        <end position="354"/>
    </location>
</feature>
<feature type="repeat" description="ARM 6">
    <location>
        <begin position="355"/>
        <end position="399"/>
    </location>
</feature>
<feature type="repeat" description="ARM 7">
    <location>
        <begin position="401"/>
        <end position="440"/>
    </location>
</feature>
<feature type="domain" description="BTB" evidence="2">
    <location>
        <begin position="745"/>
        <end position="813"/>
    </location>
</feature>
<feature type="region of interest" description="Disordered" evidence="3">
    <location>
        <begin position="82"/>
        <end position="111"/>
    </location>
</feature>
<feature type="region of interest" description="Disordered" evidence="3">
    <location>
        <begin position="472"/>
        <end position="516"/>
    </location>
</feature>
<feature type="compositionally biased region" description="Low complexity" evidence="3">
    <location>
        <begin position="82"/>
        <end position="104"/>
    </location>
</feature>
<feature type="compositionally biased region" description="Polar residues" evidence="3">
    <location>
        <begin position="484"/>
        <end position="499"/>
    </location>
</feature>
<feature type="modified residue" description="Phosphoserine" evidence="1">
    <location>
        <position position="337"/>
    </location>
</feature>
<organism>
    <name type="scientific">Mus musculus</name>
    <name type="common">Mouse</name>
    <dbReference type="NCBI Taxonomy" id="10090"/>
    <lineage>
        <taxon>Eukaryota</taxon>
        <taxon>Metazoa</taxon>
        <taxon>Chordata</taxon>
        <taxon>Craniata</taxon>
        <taxon>Vertebrata</taxon>
        <taxon>Euteleostomi</taxon>
        <taxon>Mammalia</taxon>
        <taxon>Eutheria</taxon>
        <taxon>Euarchontoglires</taxon>
        <taxon>Glires</taxon>
        <taxon>Rodentia</taxon>
        <taxon>Myomorpha</taxon>
        <taxon>Muroidea</taxon>
        <taxon>Muridae</taxon>
        <taxon>Murinae</taxon>
        <taxon>Mus</taxon>
        <taxon>Mus</taxon>
    </lineage>
</organism>
<evidence type="ECO:0000250" key="1">
    <source>
        <dbReference type="UniProtKB" id="Q96C12"/>
    </source>
</evidence>
<evidence type="ECO:0000255" key="2">
    <source>
        <dbReference type="PROSITE-ProRule" id="PRU00037"/>
    </source>
</evidence>
<evidence type="ECO:0000256" key="3">
    <source>
        <dbReference type="SAM" id="MobiDB-lite"/>
    </source>
</evidence>
<evidence type="ECO:0000269" key="4">
    <source>
    </source>
</evidence>
<evidence type="ECO:0000269" key="5">
    <source>
    </source>
</evidence>
<evidence type="ECO:0000269" key="6">
    <source>
    </source>
</evidence>
<evidence type="ECO:0000269" key="7">
    <source>
    </source>
</evidence>
<evidence type="ECO:0000303" key="8">
    <source>
    </source>
</evidence>
<evidence type="ECO:0000305" key="9"/>
<evidence type="ECO:0000312" key="10">
    <source>
        <dbReference type="MGI" id="MGI:2384586"/>
    </source>
</evidence>
<accession>Q5EBP3</accession>
<accession>Q6KAU6</accession>
<accession>Q8CDI5</accession>
<accession>Q8R3J0</accession>
<keyword id="KW-0158">Chromosome</keyword>
<keyword id="KW-0963">Cytoplasm</keyword>
<keyword id="KW-0539">Nucleus</keyword>
<keyword id="KW-0597">Phosphoprotein</keyword>
<keyword id="KW-1185">Reference proteome</keyword>
<keyword id="KW-0677">Repeat</keyword>
<keyword id="KW-0832">Ubl conjugation</keyword>
<keyword id="KW-0833">Ubl conjugation pathway</keyword>